<feature type="chain" id="PRO_1000013356" description="Large ribosomal subunit protein bL34">
    <location>
        <begin position="1"/>
        <end position="44"/>
    </location>
</feature>
<dbReference type="EMBL" id="CP000269">
    <property type="protein sequence ID" value="ABR91648.1"/>
    <property type="molecule type" value="Genomic_DNA"/>
</dbReference>
<dbReference type="RefSeq" id="WP_011872825.1">
    <property type="nucleotide sequence ID" value="NC_009659.1"/>
</dbReference>
<dbReference type="SMR" id="A6T4E0"/>
<dbReference type="STRING" id="375286.mma_3697"/>
<dbReference type="KEGG" id="mms:mma_3697"/>
<dbReference type="eggNOG" id="COG0230">
    <property type="taxonomic scope" value="Bacteria"/>
</dbReference>
<dbReference type="HOGENOM" id="CLU_129938_2_0_4"/>
<dbReference type="OrthoDB" id="9804164at2"/>
<dbReference type="Proteomes" id="UP000006388">
    <property type="component" value="Chromosome"/>
</dbReference>
<dbReference type="GO" id="GO:1990904">
    <property type="term" value="C:ribonucleoprotein complex"/>
    <property type="evidence" value="ECO:0007669"/>
    <property type="project" value="UniProtKB-KW"/>
</dbReference>
<dbReference type="GO" id="GO:0005840">
    <property type="term" value="C:ribosome"/>
    <property type="evidence" value="ECO:0007669"/>
    <property type="project" value="UniProtKB-KW"/>
</dbReference>
<dbReference type="GO" id="GO:0003735">
    <property type="term" value="F:structural constituent of ribosome"/>
    <property type="evidence" value="ECO:0007669"/>
    <property type="project" value="InterPro"/>
</dbReference>
<dbReference type="GO" id="GO:0006412">
    <property type="term" value="P:translation"/>
    <property type="evidence" value="ECO:0007669"/>
    <property type="project" value="UniProtKB-UniRule"/>
</dbReference>
<dbReference type="FunFam" id="1.10.287.3980:FF:000001">
    <property type="entry name" value="Mitochondrial ribosomal protein L34"/>
    <property type="match status" value="1"/>
</dbReference>
<dbReference type="Gene3D" id="1.10.287.3980">
    <property type="match status" value="1"/>
</dbReference>
<dbReference type="HAMAP" id="MF_00391">
    <property type="entry name" value="Ribosomal_bL34"/>
    <property type="match status" value="1"/>
</dbReference>
<dbReference type="InterPro" id="IPR000271">
    <property type="entry name" value="Ribosomal_bL34"/>
</dbReference>
<dbReference type="InterPro" id="IPR020939">
    <property type="entry name" value="Ribosomal_bL34_CS"/>
</dbReference>
<dbReference type="NCBIfam" id="TIGR01030">
    <property type="entry name" value="rpmH_bact"/>
    <property type="match status" value="1"/>
</dbReference>
<dbReference type="PANTHER" id="PTHR14503:SF4">
    <property type="entry name" value="LARGE RIBOSOMAL SUBUNIT PROTEIN BL34M"/>
    <property type="match status" value="1"/>
</dbReference>
<dbReference type="PANTHER" id="PTHR14503">
    <property type="entry name" value="MITOCHONDRIAL RIBOSOMAL PROTEIN 34 FAMILY MEMBER"/>
    <property type="match status" value="1"/>
</dbReference>
<dbReference type="Pfam" id="PF00468">
    <property type="entry name" value="Ribosomal_L34"/>
    <property type="match status" value="1"/>
</dbReference>
<dbReference type="PROSITE" id="PS00784">
    <property type="entry name" value="RIBOSOMAL_L34"/>
    <property type="match status" value="1"/>
</dbReference>
<gene>
    <name evidence="1" type="primary">rpmH</name>
    <name type="ordered locus">mma_3697</name>
</gene>
<evidence type="ECO:0000255" key="1">
    <source>
        <dbReference type="HAMAP-Rule" id="MF_00391"/>
    </source>
</evidence>
<evidence type="ECO:0000305" key="2"/>
<organism>
    <name type="scientific">Janthinobacterium sp. (strain Marseille)</name>
    <name type="common">Minibacterium massiliensis</name>
    <dbReference type="NCBI Taxonomy" id="375286"/>
    <lineage>
        <taxon>Bacteria</taxon>
        <taxon>Pseudomonadati</taxon>
        <taxon>Pseudomonadota</taxon>
        <taxon>Betaproteobacteria</taxon>
        <taxon>Burkholderiales</taxon>
        <taxon>Oxalobacteraceae</taxon>
        <taxon>Janthinobacterium</taxon>
    </lineage>
</organism>
<protein>
    <recommendedName>
        <fullName evidence="1">Large ribosomal subunit protein bL34</fullName>
    </recommendedName>
    <alternativeName>
        <fullName evidence="2">50S ribosomal protein L34</fullName>
    </alternativeName>
</protein>
<sequence>MKRTYQPSVVRRKRTHGFRVRMATRGGRAVLNARRAKGRKRLAA</sequence>
<name>RL34_JANMA</name>
<proteinExistence type="inferred from homology"/>
<comment type="similarity">
    <text evidence="1">Belongs to the bacterial ribosomal protein bL34 family.</text>
</comment>
<accession>A6T4E0</accession>
<reference key="1">
    <citation type="journal article" date="2007" name="PLoS Genet.">
        <title>Genome analysis of Minibacterium massiliensis highlights the convergent evolution of water-living bacteria.</title>
        <authorList>
            <person name="Audic S."/>
            <person name="Robert C."/>
            <person name="Campagna B."/>
            <person name="Parinello H."/>
            <person name="Claverie J.-M."/>
            <person name="Raoult D."/>
            <person name="Drancourt M."/>
        </authorList>
    </citation>
    <scope>NUCLEOTIDE SEQUENCE [LARGE SCALE GENOMIC DNA]</scope>
    <source>
        <strain>Marseille</strain>
    </source>
</reference>
<keyword id="KW-0687">Ribonucleoprotein</keyword>
<keyword id="KW-0689">Ribosomal protein</keyword>